<keyword id="KW-0204">Cytolysis</keyword>
<keyword id="KW-0354">Hemolysis</keyword>
<keyword id="KW-0408">Iron</keyword>
<keyword id="KW-0479">Metal-binding</keyword>
<keyword id="KW-0677">Repeat</keyword>
<keyword id="KW-0800">Toxin</keyword>
<keyword id="KW-0843">Virulence</keyword>
<gene>
    <name type="primary">vllY</name>
    <name type="ordered locus">VV1_2768</name>
</gene>
<organism>
    <name type="scientific">Vibrio vulnificus (strain CMCP6)</name>
    <dbReference type="NCBI Taxonomy" id="216895"/>
    <lineage>
        <taxon>Bacteria</taxon>
        <taxon>Pseudomonadati</taxon>
        <taxon>Pseudomonadota</taxon>
        <taxon>Gammaproteobacteria</taxon>
        <taxon>Vibrionales</taxon>
        <taxon>Vibrionaceae</taxon>
        <taxon>Vibrio</taxon>
    </lineage>
</organism>
<protein>
    <recommendedName>
        <fullName>Hemolysin VllY</fullName>
    </recommendedName>
</protein>
<sequence>MVDAINPLGTDGFEFVEYTAADNTGIEQLKHLFSSLGFAEVAKHRSKEAWLYRQGDINFVVNAQPHSQAEEFAKVHGPSVCGMAFRVQDAASALKHALTNGAEEYKTEIGPMELSIPAVYGIGGSLLYFVDRYGKQSIYDVDFRFYDDAAQRLAKSDVGLYEIDHLTHNVKRGNMDTWAGFYERIGNFREIRYFDIEGKLTGLVSRAMTAPCGKIRIPINESSDDKSQIEEFIREYNGEGIQHIALTTDDIYQTVQTLRDRGMDFMPTPDTYYDKVDSRVEGHKEDVSRLRDLRILIDGAPLKDGILLQIFTQTVIGPVFFEIIQRKGNEGFGEGNFKALFESIEEDQIRRGVLNNA</sequence>
<name>VLLY_VIBVU</name>
<proteinExistence type="inferred from homology"/>
<feature type="chain" id="PRO_0000088414" description="Hemolysin VllY">
    <location>
        <begin position="1"/>
        <end position="357"/>
    </location>
</feature>
<feature type="domain" description="VOC 1" evidence="2">
    <location>
        <begin position="12"/>
        <end position="132"/>
    </location>
</feature>
<feature type="domain" description="VOC 2" evidence="2">
    <location>
        <begin position="162"/>
        <end position="313"/>
    </location>
</feature>
<feature type="binding site" evidence="1">
    <location>
        <position position="165"/>
    </location>
    <ligand>
        <name>Fe cation</name>
        <dbReference type="ChEBI" id="CHEBI:24875"/>
    </ligand>
</feature>
<feature type="binding site" evidence="1">
    <location>
        <position position="243"/>
    </location>
    <ligand>
        <name>Fe cation</name>
        <dbReference type="ChEBI" id="CHEBI:24875"/>
    </ligand>
</feature>
<feature type="binding site" evidence="1">
    <location>
        <position position="322"/>
    </location>
    <ligand>
        <name>Fe cation</name>
        <dbReference type="ChEBI" id="CHEBI:24875"/>
    </ligand>
</feature>
<feature type="sequence conflict" description="In Ref. 1; AAC45755." evidence="3" ref="1">
    <original>NV</original>
    <variation>TL</variation>
    <location>
        <begin position="169"/>
        <end position="170"/>
    </location>
</feature>
<feature type="sequence conflict" description="In Ref. 1; AAC45755." evidence="3" ref="1">
    <original>G</original>
    <variation>R</variation>
    <location>
        <position position="173"/>
    </location>
</feature>
<feature type="sequence conflict" description="In Ref. 1; AAC45755." evidence="3" ref="1">
    <original>FYERIGNFRE</original>
    <variation>SMSVLVISVK</variation>
    <location>
        <begin position="181"/>
        <end position="190"/>
    </location>
</feature>
<feature type="sequence conflict" description="In Ref. 1; AAC45755." evidence="3" ref="1">
    <original>G</original>
    <variation>R</variation>
    <location>
        <position position="198"/>
    </location>
</feature>
<feature type="sequence conflict" description="In Ref. 1; AAC45755." evidence="3" ref="1">
    <original>T</original>
    <variation>N</variation>
    <location>
        <position position="209"/>
    </location>
</feature>
<feature type="sequence conflict" description="In Ref. 1; AAC45755." evidence="3" ref="1">
    <original>D</original>
    <variation>N</variation>
    <location>
        <position position="286"/>
    </location>
</feature>
<dbReference type="EMBL" id="U97357">
    <property type="protein sequence ID" value="AAC45755.1"/>
    <property type="molecule type" value="Genomic_DNA"/>
</dbReference>
<dbReference type="EMBL" id="AE016795">
    <property type="protein sequence ID" value="AAO11111.1"/>
    <property type="molecule type" value="Genomic_DNA"/>
</dbReference>
<dbReference type="SMR" id="O06695"/>
<dbReference type="KEGG" id="vvu:VV1_2768"/>
<dbReference type="HOGENOM" id="CLU_034004_1_0_6"/>
<dbReference type="Proteomes" id="UP000002275">
    <property type="component" value="Chromosome 1"/>
</dbReference>
<dbReference type="GO" id="GO:0003868">
    <property type="term" value="F:4-hydroxyphenylpyruvate dioxygenase activity"/>
    <property type="evidence" value="ECO:0007669"/>
    <property type="project" value="InterPro"/>
</dbReference>
<dbReference type="GO" id="GO:0046872">
    <property type="term" value="F:metal ion binding"/>
    <property type="evidence" value="ECO:0007669"/>
    <property type="project" value="UniProtKB-KW"/>
</dbReference>
<dbReference type="GO" id="GO:0090729">
    <property type="term" value="F:toxin activity"/>
    <property type="evidence" value="ECO:0007669"/>
    <property type="project" value="UniProtKB-KW"/>
</dbReference>
<dbReference type="GO" id="GO:0001897">
    <property type="term" value="P:symbiont-mediated cytolysis of host cell"/>
    <property type="evidence" value="ECO:0000314"/>
    <property type="project" value="UniProtKB"/>
</dbReference>
<dbReference type="GO" id="GO:0006572">
    <property type="term" value="P:tyrosine catabolic process"/>
    <property type="evidence" value="ECO:0007669"/>
    <property type="project" value="TreeGrafter"/>
</dbReference>
<dbReference type="CDD" id="cd07250">
    <property type="entry name" value="HPPD_C_like"/>
    <property type="match status" value="1"/>
</dbReference>
<dbReference type="CDD" id="cd08342">
    <property type="entry name" value="HPPD_N_like"/>
    <property type="match status" value="1"/>
</dbReference>
<dbReference type="FunFam" id="3.10.180.10:FF:000007">
    <property type="entry name" value="4-hydroxyphenylpyruvate dioxygenase"/>
    <property type="match status" value="1"/>
</dbReference>
<dbReference type="FunFam" id="3.10.180.10:FF:000018">
    <property type="entry name" value="4-hydroxyphenylpyruvate dioxygenase"/>
    <property type="match status" value="1"/>
</dbReference>
<dbReference type="Gene3D" id="3.10.180.10">
    <property type="entry name" value="2,3-Dihydroxybiphenyl 1,2-Dioxygenase, domain 1"/>
    <property type="match status" value="2"/>
</dbReference>
<dbReference type="InterPro" id="IPR005956">
    <property type="entry name" value="4OHPhenylPyrv_dOase"/>
</dbReference>
<dbReference type="InterPro" id="IPR041735">
    <property type="entry name" value="4OHPhenylPyrv_dOase_C"/>
</dbReference>
<dbReference type="InterPro" id="IPR041736">
    <property type="entry name" value="4OHPhenylPyrv_dOase_N"/>
</dbReference>
<dbReference type="InterPro" id="IPR029068">
    <property type="entry name" value="Glyas_Bleomycin-R_OHBP_Dase"/>
</dbReference>
<dbReference type="InterPro" id="IPR004360">
    <property type="entry name" value="Glyas_Fos-R_dOase_dom"/>
</dbReference>
<dbReference type="InterPro" id="IPR037523">
    <property type="entry name" value="VOC"/>
</dbReference>
<dbReference type="NCBIfam" id="TIGR01263">
    <property type="entry name" value="4HPPD"/>
    <property type="match status" value="1"/>
</dbReference>
<dbReference type="PANTHER" id="PTHR11959">
    <property type="entry name" value="4-HYDROXYPHENYLPYRUVATE DIOXYGENASE"/>
    <property type="match status" value="1"/>
</dbReference>
<dbReference type="PANTHER" id="PTHR11959:SF1">
    <property type="entry name" value="4-HYDROXYPHENYLPYRUVATE DIOXYGENASE"/>
    <property type="match status" value="1"/>
</dbReference>
<dbReference type="Pfam" id="PF00903">
    <property type="entry name" value="Glyoxalase"/>
    <property type="match status" value="1"/>
</dbReference>
<dbReference type="Pfam" id="PF14696">
    <property type="entry name" value="Glyoxalase_5"/>
    <property type="match status" value="1"/>
</dbReference>
<dbReference type="PIRSF" id="PIRSF009283">
    <property type="entry name" value="HPP_dOase"/>
    <property type="match status" value="1"/>
</dbReference>
<dbReference type="SUPFAM" id="SSF54593">
    <property type="entry name" value="Glyoxalase/Bleomycin resistance protein/Dihydroxybiphenyl dioxygenase"/>
    <property type="match status" value="1"/>
</dbReference>
<dbReference type="PROSITE" id="PS51819">
    <property type="entry name" value="VOC"/>
    <property type="match status" value="2"/>
</dbReference>
<reference key="1">
    <citation type="submission" date="1997-05" db="EMBL/GenBank/DDBJ databases">
        <authorList>
            <person name="Chang M.C."/>
        </authorList>
    </citation>
    <scope>NUCLEOTIDE SEQUENCE [GENOMIC DNA]</scope>
    <source>
        <strain>CKM-1</strain>
    </source>
</reference>
<reference key="2">
    <citation type="submission" date="2002-12" db="EMBL/GenBank/DDBJ databases">
        <title>Complete genome sequence of Vibrio vulnificus CMCP6.</title>
        <authorList>
            <person name="Rhee J.H."/>
            <person name="Kim S.Y."/>
            <person name="Chung S.S."/>
            <person name="Kim J.J."/>
            <person name="Moon Y.H."/>
            <person name="Jeong H."/>
            <person name="Choy H.E."/>
        </authorList>
    </citation>
    <scope>NUCLEOTIDE SEQUENCE [LARGE SCALE GENOMIC DNA]</scope>
    <source>
        <strain>CMCP6</strain>
    </source>
</reference>
<evidence type="ECO:0000250" key="1"/>
<evidence type="ECO:0000255" key="2">
    <source>
        <dbReference type="PROSITE-ProRule" id="PRU01163"/>
    </source>
</evidence>
<evidence type="ECO:0000305" key="3"/>
<comment type="cofactor">
    <cofactor evidence="1">
        <name>Fe cation</name>
        <dbReference type="ChEBI" id="CHEBI:24875"/>
    </cofactor>
    <text evidence="1">Binds 1 Fe cation per subunit.</text>
</comment>
<comment type="similarity">
    <text evidence="3">Belongs to the 4HPPD family.</text>
</comment>
<accession>O06695</accession>